<organism>
    <name type="scientific">Thermus thermophilus (strain ATCC 27634 / DSM 579 / HB8)</name>
    <dbReference type="NCBI Taxonomy" id="300852"/>
    <lineage>
        <taxon>Bacteria</taxon>
        <taxon>Thermotogati</taxon>
        <taxon>Deinococcota</taxon>
        <taxon>Deinococci</taxon>
        <taxon>Thermales</taxon>
        <taxon>Thermaceae</taxon>
        <taxon>Thermus</taxon>
    </lineage>
</organism>
<gene>
    <name type="ordered locus">TTHA1283</name>
</gene>
<accession>Q5SIT1</accession>
<dbReference type="EMBL" id="AP008226">
    <property type="protein sequence ID" value="BAD71106.1"/>
    <property type="molecule type" value="Genomic_DNA"/>
</dbReference>
<dbReference type="RefSeq" id="WP_011173343.1">
    <property type="nucleotide sequence ID" value="NC_006461.1"/>
</dbReference>
<dbReference type="RefSeq" id="YP_144549.1">
    <property type="nucleotide sequence ID" value="NC_006461.1"/>
</dbReference>
<dbReference type="SMR" id="Q5SIT1"/>
<dbReference type="EnsemblBacteria" id="BAD71106">
    <property type="protein sequence ID" value="BAD71106"/>
    <property type="gene ID" value="BAD71106"/>
</dbReference>
<dbReference type="GeneID" id="3169078"/>
<dbReference type="KEGG" id="ttj:TTHA1283"/>
<dbReference type="PATRIC" id="fig|300852.9.peg.1262"/>
<dbReference type="eggNOG" id="COG2220">
    <property type="taxonomic scope" value="Bacteria"/>
</dbReference>
<dbReference type="HOGENOM" id="CLU_070010_4_0_0"/>
<dbReference type="PhylomeDB" id="Q5SIT1"/>
<dbReference type="Proteomes" id="UP000000532">
    <property type="component" value="Chromosome"/>
</dbReference>
<dbReference type="GO" id="GO:0016787">
    <property type="term" value="F:hydrolase activity"/>
    <property type="evidence" value="ECO:0007669"/>
    <property type="project" value="UniProtKB-UniRule"/>
</dbReference>
<dbReference type="Gene3D" id="3.60.15.10">
    <property type="entry name" value="Ribonuclease Z/Hydroxyacylglutathione hydrolase-like"/>
    <property type="match status" value="1"/>
</dbReference>
<dbReference type="HAMAP" id="MF_00457">
    <property type="entry name" value="UPF0173"/>
    <property type="match status" value="1"/>
</dbReference>
<dbReference type="InterPro" id="IPR001279">
    <property type="entry name" value="Metallo-B-lactamas"/>
</dbReference>
<dbReference type="InterPro" id="IPR036866">
    <property type="entry name" value="RibonucZ/Hydroxyglut_hydro"/>
</dbReference>
<dbReference type="InterPro" id="IPR022877">
    <property type="entry name" value="UPF0173"/>
</dbReference>
<dbReference type="InterPro" id="IPR050114">
    <property type="entry name" value="UPF0173_UPF0282_UlaG_hydrolase"/>
</dbReference>
<dbReference type="NCBIfam" id="NF001911">
    <property type="entry name" value="PRK00685.1"/>
    <property type="match status" value="1"/>
</dbReference>
<dbReference type="PANTHER" id="PTHR43546:SF3">
    <property type="entry name" value="UPF0173 METAL-DEPENDENT HYDROLASE MJ1163"/>
    <property type="match status" value="1"/>
</dbReference>
<dbReference type="PANTHER" id="PTHR43546">
    <property type="entry name" value="UPF0173 METAL-DEPENDENT HYDROLASE MJ1163-RELATED"/>
    <property type="match status" value="1"/>
</dbReference>
<dbReference type="Pfam" id="PF12706">
    <property type="entry name" value="Lactamase_B_2"/>
    <property type="match status" value="1"/>
</dbReference>
<dbReference type="SMART" id="SM00849">
    <property type="entry name" value="Lactamase_B"/>
    <property type="match status" value="1"/>
</dbReference>
<dbReference type="SUPFAM" id="SSF56281">
    <property type="entry name" value="Metallo-hydrolase/oxidoreductase"/>
    <property type="match status" value="1"/>
</dbReference>
<proteinExistence type="inferred from homology"/>
<keyword id="KW-0378">Hydrolase</keyword>
<keyword id="KW-1185">Reference proteome</keyword>
<sequence length="224" mass="24183">MVEVRYLGHSAVLLTDGKTRIVIDPFLTGNPMAALGVGEVQADLILVTHAHGDHFGDSVALSKKGGVVVSTFEIATYAEKHGAKSVPMNLGGTYRFEGGWLKWVPAWHSSSFPDGTYGGMPMGVVVELGGKRIYHAGDTALFSDMRLIGEMGLDLALLPIGDHFTMGPEDALKALELLRPKKVVPIHYNTFPPIRQDGEAFAQRAREKGVEGHALKPGEVLRLD</sequence>
<evidence type="ECO:0000255" key="1">
    <source>
        <dbReference type="HAMAP-Rule" id="MF_00457"/>
    </source>
</evidence>
<name>Y1283_THET8</name>
<reference key="1">
    <citation type="submission" date="2004-11" db="EMBL/GenBank/DDBJ databases">
        <title>Complete genome sequence of Thermus thermophilus HB8.</title>
        <authorList>
            <person name="Masui R."/>
            <person name="Kurokawa K."/>
            <person name="Nakagawa N."/>
            <person name="Tokunaga F."/>
            <person name="Koyama Y."/>
            <person name="Shibata T."/>
            <person name="Oshima T."/>
            <person name="Yokoyama S."/>
            <person name="Yasunaga T."/>
            <person name="Kuramitsu S."/>
        </authorList>
    </citation>
    <scope>NUCLEOTIDE SEQUENCE [LARGE SCALE GENOMIC DNA]</scope>
    <source>
        <strain>ATCC 27634 / DSM 579 / HB8</strain>
    </source>
</reference>
<comment type="similarity">
    <text evidence="1">Belongs to the UPF0173 family.</text>
</comment>
<feature type="chain" id="PRO_1000013517" description="UPF0173 metal-dependent hydrolase TTHA1283">
    <location>
        <begin position="1"/>
        <end position="224"/>
    </location>
</feature>
<protein>
    <recommendedName>
        <fullName evidence="1">UPF0173 metal-dependent hydrolase TTHA1283</fullName>
    </recommendedName>
</protein>